<feature type="chain" id="PRO_0000392809" description="Dermonecrotic toxin LruSicTox-alphaIC1a">
    <location>
        <begin position="1" status="less than"/>
        <end position="273"/>
    </location>
</feature>
<feature type="active site" evidence="5">
    <location>
        <position position="5"/>
    </location>
</feature>
<feature type="active site" description="Nucleophile" evidence="5">
    <location>
        <position position="41"/>
    </location>
</feature>
<feature type="binding site" evidence="5">
    <location>
        <position position="25"/>
    </location>
    <ligand>
        <name>Mg(2+)</name>
        <dbReference type="ChEBI" id="CHEBI:18420"/>
    </ligand>
</feature>
<feature type="binding site" evidence="5">
    <location>
        <position position="27"/>
    </location>
    <ligand>
        <name>Mg(2+)</name>
        <dbReference type="ChEBI" id="CHEBI:18420"/>
    </ligand>
</feature>
<feature type="binding site" evidence="5">
    <location>
        <position position="85"/>
    </location>
    <ligand>
        <name>Mg(2+)</name>
        <dbReference type="ChEBI" id="CHEBI:18420"/>
    </ligand>
</feature>
<feature type="disulfide bond" evidence="3">
    <location>
        <begin position="45"/>
        <end position="51"/>
    </location>
</feature>
<feature type="disulfide bond" evidence="3">
    <location>
        <begin position="47"/>
        <end position="190"/>
    </location>
</feature>
<feature type="non-terminal residue">
    <location>
        <position position="1"/>
    </location>
</feature>
<accession>C0JB03</accession>
<sequence length="273" mass="30889">WIMGHMVNSIAQIDEFVKLGANSTETDVSFDKQANPEYTYHGTPCDCGRDCLHWENFNDFPKGLRKATTPGDSKYREKLILVVFDLKTGSLYDNQAYDAGTKLAKNLLEHYWNNGNNGGRAYIVLSIPNLNHYKLIEGFKETLKKEGHEDLLEKVGHDFSGNDDIPDVEKAYKKAGVTGHVWQSDGITNCLLRGLSRVKLAVANRDSGNEFINKVYYWTVDKRSTTRDSLDAGVDGIMTNYPDVIADVLNEAAYKKKFRVATYDDNPWETFKP</sequence>
<evidence type="ECO:0000250" key="1">
    <source>
        <dbReference type="UniProtKB" id="A0A0D4WTV1"/>
    </source>
</evidence>
<evidence type="ECO:0000250" key="2">
    <source>
        <dbReference type="UniProtKB" id="A0A0D4WV12"/>
    </source>
</evidence>
<evidence type="ECO:0000250" key="3">
    <source>
        <dbReference type="UniProtKB" id="P0CE80"/>
    </source>
</evidence>
<evidence type="ECO:0000250" key="4">
    <source>
        <dbReference type="UniProtKB" id="Q4ZFU2"/>
    </source>
</evidence>
<evidence type="ECO:0000250" key="5">
    <source>
        <dbReference type="UniProtKB" id="Q8I914"/>
    </source>
</evidence>
<evidence type="ECO:0000303" key="6">
    <source>
    </source>
</evidence>
<evidence type="ECO:0000305" key="7"/>
<evidence type="ECO:0000305" key="8">
    <source>
    </source>
</evidence>
<organism>
    <name type="scientific">Loxosceles rufescens</name>
    <name type="common">Mediterranean recluse spider</name>
    <name type="synonym">Scytodes rufescens</name>
    <dbReference type="NCBI Taxonomy" id="571528"/>
    <lineage>
        <taxon>Eukaryota</taxon>
        <taxon>Metazoa</taxon>
        <taxon>Ecdysozoa</taxon>
        <taxon>Arthropoda</taxon>
        <taxon>Chelicerata</taxon>
        <taxon>Arachnida</taxon>
        <taxon>Araneae</taxon>
        <taxon>Araneomorphae</taxon>
        <taxon>Haplogynae</taxon>
        <taxon>Scytodoidea</taxon>
        <taxon>Sicariidae</taxon>
        <taxon>Loxosceles</taxon>
    </lineage>
</organism>
<dbReference type="EC" id="4.6.1.-" evidence="4"/>
<dbReference type="EMBL" id="FJ171438">
    <property type="protein sequence ID" value="ACN48934.1"/>
    <property type="molecule type" value="mRNA"/>
</dbReference>
<dbReference type="SMR" id="C0JB03"/>
<dbReference type="GO" id="GO:0005576">
    <property type="term" value="C:extracellular region"/>
    <property type="evidence" value="ECO:0007669"/>
    <property type="project" value="UniProtKB-SubCell"/>
</dbReference>
<dbReference type="GO" id="GO:0016829">
    <property type="term" value="F:lyase activity"/>
    <property type="evidence" value="ECO:0007669"/>
    <property type="project" value="UniProtKB-KW"/>
</dbReference>
<dbReference type="GO" id="GO:0046872">
    <property type="term" value="F:metal ion binding"/>
    <property type="evidence" value="ECO:0007669"/>
    <property type="project" value="UniProtKB-KW"/>
</dbReference>
<dbReference type="GO" id="GO:0008081">
    <property type="term" value="F:phosphoric diester hydrolase activity"/>
    <property type="evidence" value="ECO:0007669"/>
    <property type="project" value="InterPro"/>
</dbReference>
<dbReference type="GO" id="GO:0090729">
    <property type="term" value="F:toxin activity"/>
    <property type="evidence" value="ECO:0007669"/>
    <property type="project" value="UniProtKB-KW"/>
</dbReference>
<dbReference type="GO" id="GO:0031640">
    <property type="term" value="P:killing of cells of another organism"/>
    <property type="evidence" value="ECO:0007669"/>
    <property type="project" value="UniProtKB-KW"/>
</dbReference>
<dbReference type="GO" id="GO:0016042">
    <property type="term" value="P:lipid catabolic process"/>
    <property type="evidence" value="ECO:0007669"/>
    <property type="project" value="UniProtKB-KW"/>
</dbReference>
<dbReference type="CDD" id="cd08576">
    <property type="entry name" value="GDPD_like_SMaseD_PLD"/>
    <property type="match status" value="1"/>
</dbReference>
<dbReference type="Gene3D" id="3.20.20.190">
    <property type="entry name" value="Phosphatidylinositol (PI) phosphodiesterase"/>
    <property type="match status" value="1"/>
</dbReference>
<dbReference type="InterPro" id="IPR017946">
    <property type="entry name" value="PLC-like_Pdiesterase_TIM-brl"/>
</dbReference>
<dbReference type="Pfam" id="PF13653">
    <property type="entry name" value="GDPD_2"/>
    <property type="match status" value="1"/>
</dbReference>
<dbReference type="SUPFAM" id="SSF51695">
    <property type="entry name" value="PLC-like phosphodiesterases"/>
    <property type="match status" value="1"/>
</dbReference>
<reference key="1">
    <citation type="journal article" date="2009" name="Mol. Biol. Evol.">
        <title>Molecular evolution, functional variation, and proposed nomenclature of the gene family that includes sphingomyelinase D in sicariid spider venoms.</title>
        <authorList>
            <person name="Binford G.J."/>
            <person name="Bodner M.R."/>
            <person name="Cordes M.H."/>
            <person name="Baldwin K.L."/>
            <person name="Rynerson M.R."/>
            <person name="Burns S.N."/>
            <person name="Zobel-Thropp P.A."/>
        </authorList>
    </citation>
    <scope>NUCLEOTIDE SEQUENCE [MRNA]</scope>
    <scope>NOMENCLATURE</scope>
    <source>
        <tissue>Venom gland</tissue>
    </source>
</reference>
<proteinExistence type="evidence at transcript level"/>
<keyword id="KW-0204">Cytolysis</keyword>
<keyword id="KW-1061">Dermonecrotic toxin</keyword>
<keyword id="KW-1015">Disulfide bond</keyword>
<keyword id="KW-0354">Hemolysis</keyword>
<keyword id="KW-0442">Lipid degradation</keyword>
<keyword id="KW-0443">Lipid metabolism</keyword>
<keyword id="KW-0456">Lyase</keyword>
<keyword id="KW-0460">Magnesium</keyword>
<keyword id="KW-0479">Metal-binding</keyword>
<keyword id="KW-0964">Secreted</keyword>
<keyword id="KW-0800">Toxin</keyword>
<comment type="function">
    <text evidence="1 3">Dermonecrotic toxins cleave the phosphodiester linkage between the phosphate and headgroup of certain phospholipids (sphingolipid and lysolipid substrates), forming an alcohol (often choline) and a cyclic phosphate (By similarity). This toxin acts on sphingomyelin (SM) (By similarity). It may also act on ceramide phosphoethanolamine (CPE), lysophosphatidylcholine (LPC) and lysophosphatidylethanolamine (LPE), but not on lysophosphatidylserine (LPS), and lysophosphatidylglycerol (LPG) (By similarity). It acts by transphosphatidylation, releasing exclusively cyclic phosphate products as second products (By similarity). Induces dermonecrosis, hemolysis, increased vascular permeability, edema, inflammatory response, and platelet aggregation (By similarity).</text>
</comment>
<comment type="catalytic activity">
    <reaction evidence="1">
        <text>an N-(acyl)-sphingosylphosphocholine = an N-(acyl)-sphingosyl-1,3-cyclic phosphate + choline</text>
        <dbReference type="Rhea" id="RHEA:60652"/>
        <dbReference type="ChEBI" id="CHEBI:15354"/>
        <dbReference type="ChEBI" id="CHEBI:64583"/>
        <dbReference type="ChEBI" id="CHEBI:143892"/>
    </reaction>
</comment>
<comment type="catalytic activity">
    <reaction evidence="1">
        <text>an N-(acyl)-sphingosylphosphoethanolamine = an N-(acyl)-sphingosyl-1,3-cyclic phosphate + ethanolamine</text>
        <dbReference type="Rhea" id="RHEA:60648"/>
        <dbReference type="ChEBI" id="CHEBI:57603"/>
        <dbReference type="ChEBI" id="CHEBI:143891"/>
        <dbReference type="ChEBI" id="CHEBI:143892"/>
    </reaction>
</comment>
<comment type="catalytic activity">
    <reaction evidence="1">
        <text>a 1-acyl-sn-glycero-3-phosphocholine = a 1-acyl-sn-glycero-2,3-cyclic phosphate + choline</text>
        <dbReference type="Rhea" id="RHEA:60700"/>
        <dbReference type="ChEBI" id="CHEBI:15354"/>
        <dbReference type="ChEBI" id="CHEBI:58168"/>
        <dbReference type="ChEBI" id="CHEBI:143947"/>
    </reaction>
</comment>
<comment type="catalytic activity">
    <reaction evidence="1">
        <text>a 1-acyl-sn-glycero-3-phosphoethanolamine = a 1-acyl-sn-glycero-2,3-cyclic phosphate + ethanolamine</text>
        <dbReference type="Rhea" id="RHEA:60704"/>
        <dbReference type="ChEBI" id="CHEBI:57603"/>
        <dbReference type="ChEBI" id="CHEBI:64381"/>
        <dbReference type="ChEBI" id="CHEBI:143947"/>
    </reaction>
</comment>
<comment type="cofactor">
    <cofactor evidence="5">
        <name>Mg(2+)</name>
        <dbReference type="ChEBI" id="CHEBI:18420"/>
    </cofactor>
    <text evidence="5">Binds 1 Mg(2+) ion per subunit.</text>
</comment>
<comment type="subcellular location">
    <subcellularLocation>
        <location evidence="8">Secreted</location>
    </subcellularLocation>
</comment>
<comment type="tissue specificity">
    <text evidence="8">Expressed by the venom gland.</text>
</comment>
<comment type="similarity">
    <text evidence="7">Belongs to the arthropod phospholipase D family. Class II subfamily.</text>
</comment>
<comment type="caution">
    <text evidence="1 2 4">The most common activity assay for dermonecrotic toxins detects enzymatic activity by monitoring choline release from substrate. Liberation of choline from sphingomyelin (SM) or lysophosphatidylcholine (LPC) is commonly assumed to result from substrate hydrolysis, giving either ceramide-1-phosphate (C1P) or lysophosphatidic acid (LPA), respectively, as a second product. However, two studies from Lajoie and colleagues (2013 and 2015) report the observation of exclusive formation of cyclic phosphate products as second products, resulting from intramolecular transphosphatidylation. Cyclic phosphates have vastly different biological properties from their monoester counterparts, and they may be relevant to the pathology of brown spider envenomation.</text>
</comment>
<protein>
    <recommendedName>
        <fullName evidence="6">Dermonecrotic toxin LruSicTox-alphaIC1a</fullName>
        <ecNumber evidence="4">4.6.1.-</ecNumber>
    </recommendedName>
    <alternativeName>
        <fullName>Phospholipase D</fullName>
        <shortName>PLD</shortName>
    </alternativeName>
    <alternativeName>
        <fullName>Sphingomyelin phosphodiesterase D</fullName>
        <shortName>SMD</shortName>
        <shortName>SMase D</shortName>
        <shortName>Sphingomyelinase D</shortName>
    </alternativeName>
</protein>
<name>A1OA_LOXRU</name>